<protein>
    <recommendedName>
        <fullName evidence="1">Large ribosomal subunit protein bL34</fullName>
    </recommendedName>
    <alternativeName>
        <fullName evidence="2">50S ribosomal protein L34</fullName>
    </alternativeName>
</protein>
<comment type="similarity">
    <text evidence="1">Belongs to the bacterial ribosomal protein bL34 family.</text>
</comment>
<keyword id="KW-1185">Reference proteome</keyword>
<keyword id="KW-0687">Ribonucleoprotein</keyword>
<keyword id="KW-0689">Ribosomal protein</keyword>
<sequence>MKRTFQPSLLKRKKNHGFRLRMATKSGRKILSHRRRKNRCKLTVSDK</sequence>
<feature type="chain" id="PRO_0000187504" description="Large ribosomal subunit protein bL34">
    <location>
        <begin position="1"/>
        <end position="47"/>
    </location>
</feature>
<name>RL34_WIGBR</name>
<reference key="1">
    <citation type="journal article" date="2002" name="Nat. Genet.">
        <title>Genome sequence of the endocellular obligate symbiont of tsetse flies, Wigglesworthia glossinidia.</title>
        <authorList>
            <person name="Akman L."/>
            <person name="Yamashita A."/>
            <person name="Watanabe H."/>
            <person name="Oshima K."/>
            <person name="Shiba T."/>
            <person name="Hattori M."/>
            <person name="Aksoy S."/>
        </authorList>
    </citation>
    <scope>NUCLEOTIDE SEQUENCE [LARGE SCALE GENOMIC DNA]</scope>
</reference>
<gene>
    <name evidence="1" type="primary">rpmH</name>
    <name type="ordered locus">WIGBR0140</name>
</gene>
<organism>
    <name type="scientific">Wigglesworthia glossinidia brevipalpis</name>
    <dbReference type="NCBI Taxonomy" id="36870"/>
    <lineage>
        <taxon>Bacteria</taxon>
        <taxon>Pseudomonadati</taxon>
        <taxon>Pseudomonadota</taxon>
        <taxon>Gammaproteobacteria</taxon>
        <taxon>Enterobacterales</taxon>
        <taxon>Erwiniaceae</taxon>
        <taxon>Wigglesworthia</taxon>
    </lineage>
</organism>
<evidence type="ECO:0000255" key="1">
    <source>
        <dbReference type="HAMAP-Rule" id="MF_00391"/>
    </source>
</evidence>
<evidence type="ECO:0000305" key="2"/>
<proteinExistence type="inferred from homology"/>
<dbReference type="EMBL" id="BA000021">
    <property type="protein sequence ID" value="BAC24160.1"/>
    <property type="molecule type" value="Genomic_DNA"/>
</dbReference>
<dbReference type="SMR" id="Q8D3I7"/>
<dbReference type="STRING" id="36870.gene:10368492"/>
<dbReference type="KEGG" id="wbr:rpmH"/>
<dbReference type="eggNOG" id="COG0230">
    <property type="taxonomic scope" value="Bacteria"/>
</dbReference>
<dbReference type="HOGENOM" id="CLU_129938_2_0_6"/>
<dbReference type="OrthoDB" id="9804164at2"/>
<dbReference type="Proteomes" id="UP000000562">
    <property type="component" value="Chromosome"/>
</dbReference>
<dbReference type="GO" id="GO:1990904">
    <property type="term" value="C:ribonucleoprotein complex"/>
    <property type="evidence" value="ECO:0007669"/>
    <property type="project" value="UniProtKB-KW"/>
</dbReference>
<dbReference type="GO" id="GO:0005840">
    <property type="term" value="C:ribosome"/>
    <property type="evidence" value="ECO:0007669"/>
    <property type="project" value="UniProtKB-KW"/>
</dbReference>
<dbReference type="GO" id="GO:0003735">
    <property type="term" value="F:structural constituent of ribosome"/>
    <property type="evidence" value="ECO:0007669"/>
    <property type="project" value="InterPro"/>
</dbReference>
<dbReference type="GO" id="GO:0006412">
    <property type="term" value="P:translation"/>
    <property type="evidence" value="ECO:0007669"/>
    <property type="project" value="UniProtKB-UniRule"/>
</dbReference>
<dbReference type="FunFam" id="1.10.287.3980:FF:000001">
    <property type="entry name" value="Mitochondrial ribosomal protein L34"/>
    <property type="match status" value="1"/>
</dbReference>
<dbReference type="Gene3D" id="1.10.287.3980">
    <property type="match status" value="1"/>
</dbReference>
<dbReference type="HAMAP" id="MF_00391">
    <property type="entry name" value="Ribosomal_bL34"/>
    <property type="match status" value="1"/>
</dbReference>
<dbReference type="InterPro" id="IPR000271">
    <property type="entry name" value="Ribosomal_bL34"/>
</dbReference>
<dbReference type="InterPro" id="IPR020939">
    <property type="entry name" value="Ribosomal_bL34_CS"/>
</dbReference>
<dbReference type="NCBIfam" id="TIGR01030">
    <property type="entry name" value="rpmH_bact"/>
    <property type="match status" value="1"/>
</dbReference>
<dbReference type="PANTHER" id="PTHR14503:SF4">
    <property type="entry name" value="LARGE RIBOSOMAL SUBUNIT PROTEIN BL34M"/>
    <property type="match status" value="1"/>
</dbReference>
<dbReference type="PANTHER" id="PTHR14503">
    <property type="entry name" value="MITOCHONDRIAL RIBOSOMAL PROTEIN 34 FAMILY MEMBER"/>
    <property type="match status" value="1"/>
</dbReference>
<dbReference type="Pfam" id="PF00468">
    <property type="entry name" value="Ribosomal_L34"/>
    <property type="match status" value="1"/>
</dbReference>
<dbReference type="PROSITE" id="PS00784">
    <property type="entry name" value="RIBOSOMAL_L34"/>
    <property type="match status" value="1"/>
</dbReference>
<accession>Q8D3I7</accession>